<evidence type="ECO:0000269" key="1">
    <source>
    </source>
</evidence>
<evidence type="ECO:0000305" key="2"/>
<gene>
    <name type="primary">HTA1</name>
    <name type="ordered locus">ECU02_0720</name>
</gene>
<comment type="function">
    <text>Core component of nucleosome. Nucleosomes wrap and compact DNA into chromatin, limiting DNA accessibility to the cellular machineries which require DNA as a template. Histones thereby play a central role in transcription regulation, DNA repair, DNA replication and chromosomal stability. DNA accessibility is regulated via a complex set of post-translational modifications of histones, also called histone code, and nucleosome remodeling.</text>
</comment>
<comment type="subunit">
    <text>The nucleosome is a histone octamer containing two molecules each of H2A, H2B, H3 and H4 assembled in one H3-H4 heterotetramer and two H2A-H2B heterodimers. The octamer wraps approximately 147 bp of DNA.</text>
</comment>
<comment type="subcellular location">
    <subcellularLocation>
        <location>Nucleus</location>
    </subcellularLocation>
    <subcellularLocation>
        <location>Chromosome</location>
    </subcellularLocation>
</comment>
<comment type="developmental stage">
    <text evidence="1">Expressed in late sporogonial stages.</text>
</comment>
<comment type="similarity">
    <text evidence="2">Belongs to the histone H2A family.</text>
</comment>
<name>H2A_ENCCU</name>
<organism>
    <name type="scientific">Encephalitozoon cuniculi (strain GB-M1)</name>
    <name type="common">Microsporidian parasite</name>
    <dbReference type="NCBI Taxonomy" id="284813"/>
    <lineage>
        <taxon>Eukaryota</taxon>
        <taxon>Fungi</taxon>
        <taxon>Fungi incertae sedis</taxon>
        <taxon>Microsporidia</taxon>
        <taxon>Unikaryonidae</taxon>
        <taxon>Encephalitozoon</taxon>
    </lineage>
</organism>
<feature type="chain" id="PRO_0000055227" description="Histone H2A">
    <location>
        <begin position="1"/>
        <end position="128"/>
    </location>
</feature>
<keyword id="KW-0158">Chromosome</keyword>
<keyword id="KW-0238">DNA-binding</keyword>
<keyword id="KW-0544">Nucleosome core</keyword>
<keyword id="KW-0539">Nucleus</keyword>
<keyword id="KW-1185">Reference proteome</keyword>
<reference key="1">
    <citation type="journal article" date="2001" name="Nature">
        <title>Genome sequence and gene compaction of the eukaryote parasite Encephalitozoon cuniculi.</title>
        <authorList>
            <person name="Katinka M.D."/>
            <person name="Duprat S."/>
            <person name="Cornillot E."/>
            <person name="Metenier G."/>
            <person name="Thomarat F."/>
            <person name="Prensier G."/>
            <person name="Barbe V."/>
            <person name="Peyretaillade E."/>
            <person name="Brottier P."/>
            <person name="Wincker P."/>
            <person name="Delbac F."/>
            <person name="El Alaoui H."/>
            <person name="Peyret P."/>
            <person name="Saurin W."/>
            <person name="Gouy M."/>
            <person name="Weissenbach J."/>
            <person name="Vivares C.P."/>
        </authorList>
    </citation>
    <scope>NUCLEOTIDE SEQUENCE [LARGE SCALE GENOMIC DNA]</scope>
    <source>
        <strain>GB-M1</strain>
    </source>
</reference>
<reference key="2">
    <citation type="journal article" date="2006" name="Proteomics">
        <title>Proteomic analysis of the eukaryotic parasite Encephalitozoon cuniculi (microsporidia): a reference map for proteins expressed in late sporogonial stages.</title>
        <authorList>
            <person name="Brosson D."/>
            <person name="Kuhn L."/>
            <person name="Delbac F."/>
            <person name="Garin J."/>
            <person name="Vivares C.P."/>
            <person name="Texier C."/>
        </authorList>
    </citation>
    <scope>IDENTIFICATION BY MASS SPECTROMETRY [LARGE SCALE ANALYSIS]</scope>
    <scope>DEVELOPMENTAL STAGE</scope>
</reference>
<sequence length="128" mass="14012">MVVIQGKGGKADPRVIGKDEEHQKSIVKLSQIKKIMKDRTRMRISKDALVAVSACVMYLISEITDGAKNVASTDGKKKVMPKHINNAICNDTELHFVGHDWLIKNGGMKSYIAPGDFAVSSKKGSSRD</sequence>
<protein>
    <recommendedName>
        <fullName>Histone H2A</fullName>
    </recommendedName>
</protein>
<accession>Q8SSG3</accession>
<dbReference type="EMBL" id="AL590442">
    <property type="protein sequence ID" value="CAD25102.1"/>
    <property type="molecule type" value="Genomic_DNA"/>
</dbReference>
<dbReference type="RefSeq" id="NP_584598.1">
    <property type="nucleotide sequence ID" value="NM_001040787.1"/>
</dbReference>
<dbReference type="SMR" id="Q8SSG3"/>
<dbReference type="FunCoup" id="Q8SSG3">
    <property type="interactions" value="221"/>
</dbReference>
<dbReference type="STRING" id="284813.Q8SSG3"/>
<dbReference type="GeneID" id="858588"/>
<dbReference type="KEGG" id="ecu:ECU02_0720"/>
<dbReference type="VEuPathDB" id="MicrosporidiaDB:ECU02_0720"/>
<dbReference type="HOGENOM" id="CLU_062828_6_0_1"/>
<dbReference type="InParanoid" id="Q8SSG3"/>
<dbReference type="OMA" id="HECEAEG"/>
<dbReference type="OrthoDB" id="9421954at2759"/>
<dbReference type="Proteomes" id="UP000000819">
    <property type="component" value="Chromosome II"/>
</dbReference>
<dbReference type="GO" id="GO:0000786">
    <property type="term" value="C:nucleosome"/>
    <property type="evidence" value="ECO:0007669"/>
    <property type="project" value="UniProtKB-KW"/>
</dbReference>
<dbReference type="GO" id="GO:0005634">
    <property type="term" value="C:nucleus"/>
    <property type="evidence" value="ECO:0007669"/>
    <property type="project" value="UniProtKB-SubCell"/>
</dbReference>
<dbReference type="GO" id="GO:0003677">
    <property type="term" value="F:DNA binding"/>
    <property type="evidence" value="ECO:0007669"/>
    <property type="project" value="UniProtKB-KW"/>
</dbReference>
<dbReference type="GO" id="GO:0046982">
    <property type="term" value="F:protein heterodimerization activity"/>
    <property type="evidence" value="ECO:0007669"/>
    <property type="project" value="InterPro"/>
</dbReference>
<dbReference type="Gene3D" id="1.10.20.10">
    <property type="entry name" value="Histone, subunit A"/>
    <property type="match status" value="1"/>
</dbReference>
<dbReference type="InterPro" id="IPR003958">
    <property type="entry name" value="CBFA_NFYB_domain"/>
</dbReference>
<dbReference type="InterPro" id="IPR009072">
    <property type="entry name" value="Histone-fold"/>
</dbReference>
<dbReference type="Pfam" id="PF00808">
    <property type="entry name" value="CBFD_NFYB_HMF"/>
    <property type="match status" value="1"/>
</dbReference>
<dbReference type="SUPFAM" id="SSF47113">
    <property type="entry name" value="Histone-fold"/>
    <property type="match status" value="1"/>
</dbReference>
<proteinExistence type="evidence at protein level"/>